<feature type="chain" id="PRO_1000006536" description="tRNA (guanine-N(1)-)-methyltransferase">
    <location>
        <begin position="1"/>
        <end position="244"/>
    </location>
</feature>
<feature type="binding site" evidence="1">
    <location>
        <position position="110"/>
    </location>
    <ligand>
        <name>S-adenosyl-L-methionine</name>
        <dbReference type="ChEBI" id="CHEBI:59789"/>
    </ligand>
</feature>
<feature type="binding site" evidence="1">
    <location>
        <begin position="129"/>
        <end position="134"/>
    </location>
    <ligand>
        <name>S-adenosyl-L-methionine</name>
        <dbReference type="ChEBI" id="CHEBI:59789"/>
    </ligand>
</feature>
<reference key="1">
    <citation type="journal article" date="2010" name="Environ. Microbiol.">
        <title>The genome of Syntrophomonas wolfei: new insights into syntrophic metabolism and biohydrogen production.</title>
        <authorList>
            <person name="Sieber J.R."/>
            <person name="Sims D.R."/>
            <person name="Han C."/>
            <person name="Kim E."/>
            <person name="Lykidis A."/>
            <person name="Lapidus A.L."/>
            <person name="McDonnald E."/>
            <person name="Rohlin L."/>
            <person name="Culley D.E."/>
            <person name="Gunsalus R."/>
            <person name="McInerney M.J."/>
        </authorList>
    </citation>
    <scope>NUCLEOTIDE SEQUENCE [LARGE SCALE GENOMIC DNA]</scope>
    <source>
        <strain>DSM 2245B / Goettingen</strain>
    </source>
</reference>
<keyword id="KW-0963">Cytoplasm</keyword>
<keyword id="KW-0489">Methyltransferase</keyword>
<keyword id="KW-1185">Reference proteome</keyword>
<keyword id="KW-0949">S-adenosyl-L-methionine</keyword>
<keyword id="KW-0808">Transferase</keyword>
<keyword id="KW-0819">tRNA processing</keyword>
<proteinExistence type="inferred from homology"/>
<comment type="function">
    <text evidence="1">Specifically methylates guanosine-37 in various tRNAs.</text>
</comment>
<comment type="catalytic activity">
    <reaction evidence="1">
        <text>guanosine(37) in tRNA + S-adenosyl-L-methionine = N(1)-methylguanosine(37) in tRNA + S-adenosyl-L-homocysteine + H(+)</text>
        <dbReference type="Rhea" id="RHEA:36899"/>
        <dbReference type="Rhea" id="RHEA-COMP:10145"/>
        <dbReference type="Rhea" id="RHEA-COMP:10147"/>
        <dbReference type="ChEBI" id="CHEBI:15378"/>
        <dbReference type="ChEBI" id="CHEBI:57856"/>
        <dbReference type="ChEBI" id="CHEBI:59789"/>
        <dbReference type="ChEBI" id="CHEBI:73542"/>
        <dbReference type="ChEBI" id="CHEBI:74269"/>
        <dbReference type="EC" id="2.1.1.228"/>
    </reaction>
</comment>
<comment type="subunit">
    <text evidence="1">Homodimer.</text>
</comment>
<comment type="subcellular location">
    <subcellularLocation>
        <location evidence="1">Cytoplasm</location>
    </subcellularLocation>
</comment>
<comment type="similarity">
    <text evidence="1">Belongs to the RNA methyltransferase TrmD family.</text>
</comment>
<accession>Q0AWV7</accession>
<evidence type="ECO:0000255" key="1">
    <source>
        <dbReference type="HAMAP-Rule" id="MF_00605"/>
    </source>
</evidence>
<name>TRMD_SYNWW</name>
<organism>
    <name type="scientific">Syntrophomonas wolfei subsp. wolfei (strain DSM 2245B / Goettingen)</name>
    <dbReference type="NCBI Taxonomy" id="335541"/>
    <lineage>
        <taxon>Bacteria</taxon>
        <taxon>Bacillati</taxon>
        <taxon>Bacillota</taxon>
        <taxon>Clostridia</taxon>
        <taxon>Eubacteriales</taxon>
        <taxon>Syntrophomonadaceae</taxon>
        <taxon>Syntrophomonas</taxon>
    </lineage>
</organism>
<sequence length="244" mass="27951">MKIDILTLFPEMFVSPFNESIIKRAREQGIITINITNIRDFAQDRQQQVDDYPYGGGAGMVLKANVLGTAIEEVKGPDTWVLYMSPQGKPLNQDRVWELARRKELLIVCGHYEGIDERVMAMVDEEISIGDYILTGGELPAMVLVDAIARLIPGVLGDENSAMEESFSCSLLEYPQYTRPASYGEQEVPEVLLSGHHENIRRWRKKQSLLRTLLKRPDLLLKKCFDEEEKSLLEEILFHRENKR</sequence>
<gene>
    <name evidence="1" type="primary">trmD</name>
    <name type="ordered locus">Swol_1493</name>
</gene>
<dbReference type="EC" id="2.1.1.228" evidence="1"/>
<dbReference type="EMBL" id="CP000448">
    <property type="protein sequence ID" value="ABI68797.1"/>
    <property type="molecule type" value="Genomic_DNA"/>
</dbReference>
<dbReference type="RefSeq" id="WP_011640896.1">
    <property type="nucleotide sequence ID" value="NC_008346.1"/>
</dbReference>
<dbReference type="SMR" id="Q0AWV7"/>
<dbReference type="STRING" id="335541.Swol_1493"/>
<dbReference type="KEGG" id="swo:Swol_1493"/>
<dbReference type="eggNOG" id="COG0336">
    <property type="taxonomic scope" value="Bacteria"/>
</dbReference>
<dbReference type="HOGENOM" id="CLU_047363_0_1_9"/>
<dbReference type="OrthoDB" id="9807416at2"/>
<dbReference type="Proteomes" id="UP000001968">
    <property type="component" value="Chromosome"/>
</dbReference>
<dbReference type="GO" id="GO:0005829">
    <property type="term" value="C:cytosol"/>
    <property type="evidence" value="ECO:0007669"/>
    <property type="project" value="TreeGrafter"/>
</dbReference>
<dbReference type="GO" id="GO:0052906">
    <property type="term" value="F:tRNA (guanine(37)-N1)-methyltransferase activity"/>
    <property type="evidence" value="ECO:0007669"/>
    <property type="project" value="UniProtKB-UniRule"/>
</dbReference>
<dbReference type="GO" id="GO:0002939">
    <property type="term" value="P:tRNA N1-guanine methylation"/>
    <property type="evidence" value="ECO:0007669"/>
    <property type="project" value="TreeGrafter"/>
</dbReference>
<dbReference type="CDD" id="cd18080">
    <property type="entry name" value="TrmD-like"/>
    <property type="match status" value="1"/>
</dbReference>
<dbReference type="FunFam" id="1.10.1270.20:FF:000001">
    <property type="entry name" value="tRNA (guanine-N(1)-)-methyltransferase"/>
    <property type="match status" value="1"/>
</dbReference>
<dbReference type="FunFam" id="3.40.1280.10:FF:000001">
    <property type="entry name" value="tRNA (guanine-N(1)-)-methyltransferase"/>
    <property type="match status" value="1"/>
</dbReference>
<dbReference type="Gene3D" id="3.40.1280.10">
    <property type="match status" value="1"/>
</dbReference>
<dbReference type="Gene3D" id="1.10.1270.20">
    <property type="entry name" value="tRNA(m1g37)methyltransferase, domain 2"/>
    <property type="match status" value="1"/>
</dbReference>
<dbReference type="HAMAP" id="MF_00605">
    <property type="entry name" value="TrmD"/>
    <property type="match status" value="1"/>
</dbReference>
<dbReference type="InterPro" id="IPR029028">
    <property type="entry name" value="Alpha/beta_knot_MTases"/>
</dbReference>
<dbReference type="InterPro" id="IPR023148">
    <property type="entry name" value="tRNA_m1G_MeTrfase_C_sf"/>
</dbReference>
<dbReference type="InterPro" id="IPR002649">
    <property type="entry name" value="tRNA_m1G_MeTrfase_TrmD"/>
</dbReference>
<dbReference type="InterPro" id="IPR029026">
    <property type="entry name" value="tRNA_m1G_MTases_N"/>
</dbReference>
<dbReference type="InterPro" id="IPR016009">
    <property type="entry name" value="tRNA_MeTrfase_TRMD/TRM10"/>
</dbReference>
<dbReference type="NCBIfam" id="NF000648">
    <property type="entry name" value="PRK00026.1"/>
    <property type="match status" value="1"/>
</dbReference>
<dbReference type="NCBIfam" id="TIGR00088">
    <property type="entry name" value="trmD"/>
    <property type="match status" value="1"/>
</dbReference>
<dbReference type="PANTHER" id="PTHR46417">
    <property type="entry name" value="TRNA (GUANINE-N(1)-)-METHYLTRANSFERASE"/>
    <property type="match status" value="1"/>
</dbReference>
<dbReference type="PANTHER" id="PTHR46417:SF1">
    <property type="entry name" value="TRNA (GUANINE-N(1)-)-METHYLTRANSFERASE"/>
    <property type="match status" value="1"/>
</dbReference>
<dbReference type="Pfam" id="PF01746">
    <property type="entry name" value="tRNA_m1G_MT"/>
    <property type="match status" value="1"/>
</dbReference>
<dbReference type="PIRSF" id="PIRSF000386">
    <property type="entry name" value="tRNA_mtase"/>
    <property type="match status" value="1"/>
</dbReference>
<dbReference type="SUPFAM" id="SSF75217">
    <property type="entry name" value="alpha/beta knot"/>
    <property type="match status" value="1"/>
</dbReference>
<protein>
    <recommendedName>
        <fullName evidence="1">tRNA (guanine-N(1)-)-methyltransferase</fullName>
        <ecNumber evidence="1">2.1.1.228</ecNumber>
    </recommendedName>
    <alternativeName>
        <fullName evidence="1">M1G-methyltransferase</fullName>
    </alternativeName>
    <alternativeName>
        <fullName evidence="1">tRNA [GM37] methyltransferase</fullName>
    </alternativeName>
</protein>